<protein>
    <recommendedName>
        <fullName>Pregnancy-associated glycoprotein 59g</fullName>
        <ecNumber>3.4.23.-</ecNumber>
    </recommendedName>
    <alternativeName>
        <fullName>ovPAG 59g</fullName>
    </alternativeName>
</protein>
<feature type="chain" id="PRO_0000199524" description="Pregnancy-associated glycoprotein 59g">
    <location>
        <begin position="1"/>
        <end position="25" status="greater than"/>
    </location>
</feature>
<feature type="glycosylation site" description="N-linked (GlcNAc...) asparagine" evidence="2">
    <location>
        <position position="4"/>
    </location>
</feature>
<feature type="non-terminal residue" evidence="4">
    <location>
        <position position="25"/>
    </location>
</feature>
<organism>
    <name type="scientific">Ovis aries</name>
    <name type="common">Sheep</name>
    <dbReference type="NCBI Taxonomy" id="9940"/>
    <lineage>
        <taxon>Eukaryota</taxon>
        <taxon>Metazoa</taxon>
        <taxon>Chordata</taxon>
        <taxon>Craniata</taxon>
        <taxon>Vertebrata</taxon>
        <taxon>Euteleostomi</taxon>
        <taxon>Mammalia</taxon>
        <taxon>Eutheria</taxon>
        <taxon>Laurasiatheria</taxon>
        <taxon>Artiodactyla</taxon>
        <taxon>Ruminantia</taxon>
        <taxon>Pecora</taxon>
        <taxon>Bovidae</taxon>
        <taxon>Caprinae</taxon>
        <taxon>Ovis</taxon>
    </lineage>
</organism>
<evidence type="ECO:0000250" key="1">
    <source>
        <dbReference type="UniProtKB" id="Q28755"/>
    </source>
</evidence>
<evidence type="ECO:0000255" key="2"/>
<evidence type="ECO:0000269" key="3">
    <source>
    </source>
</evidence>
<evidence type="ECO:0000303" key="4">
    <source>
    </source>
</evidence>
<evidence type="ECO:0000305" key="5"/>
<keyword id="KW-0064">Aspartyl protease</keyword>
<keyword id="KW-0903">Direct protein sequencing</keyword>
<keyword id="KW-0325">Glycoprotein</keyword>
<keyword id="KW-0378">Hydrolase</keyword>
<keyword id="KW-0645">Protease</keyword>
<keyword id="KW-1185">Reference proteome</keyword>
<keyword id="KW-0964">Secreted</keyword>
<proteinExistence type="evidence at protein level"/>
<accession>P83499</accession>
<dbReference type="EC" id="3.4.23.-"/>
<dbReference type="Proteomes" id="UP000002356">
    <property type="component" value="Unplaced"/>
</dbReference>
<dbReference type="GO" id="GO:0005576">
    <property type="term" value="C:extracellular region"/>
    <property type="evidence" value="ECO:0007669"/>
    <property type="project" value="UniProtKB-SubCell"/>
</dbReference>
<dbReference type="GO" id="GO:0004190">
    <property type="term" value="F:aspartic-type endopeptidase activity"/>
    <property type="evidence" value="ECO:0007669"/>
    <property type="project" value="UniProtKB-KW"/>
</dbReference>
<dbReference type="GO" id="GO:0006508">
    <property type="term" value="P:proteolysis"/>
    <property type="evidence" value="ECO:0007669"/>
    <property type="project" value="UniProtKB-KW"/>
</dbReference>
<comment type="subcellular location">
    <subcellularLocation>
        <location evidence="1">Secreted</location>
        <location evidence="1">Extracellular space</location>
    </subcellularLocation>
</comment>
<comment type="tissue specificity">
    <text evidence="3">Highly expressed in the placenta between day 60 and day 100 of gestation.</text>
</comment>
<comment type="miscellaneous">
    <text evidence="3">On the 2D-gel the determined pI of this protein is: 6.1, its MW determined on 1D-gel is: 59 kDa.</text>
</comment>
<comment type="similarity">
    <text evidence="2">Belongs to the peptidase A1 family.</text>
</comment>
<reference evidence="5" key="1">
    <citation type="journal article" date="2004" name="Reprod. Nutr. Dev.">
        <title>Isolation and characterization of eight pregnancy-associated glycoproteins present at high levels in the ovine placenta between day 60 and day 100 of gestation.</title>
        <authorList>
            <person name="El Amiri B."/>
            <person name="Remy B."/>
            <person name="De Sousa N.M."/>
            <person name="Beckers J.F."/>
        </authorList>
    </citation>
    <scope>PROTEIN SEQUENCE</scope>
    <source>
        <tissue evidence="3">Fetal cotyledon</tissue>
    </source>
</reference>
<name>PA59G_SHEEP</name>
<sequence>RGSNLTIHPLRNIKDLVYLGNMGIG</sequence>